<evidence type="ECO:0000250" key="1"/>
<evidence type="ECO:0000250" key="2">
    <source>
        <dbReference type="UniProtKB" id="Q3SYG4"/>
    </source>
</evidence>
<evidence type="ECO:0000269" key="3">
    <source>
    </source>
</evidence>
<evidence type="ECO:0000303" key="4">
    <source>
    </source>
</evidence>
<evidence type="ECO:0000303" key="5">
    <source>
    </source>
</evidence>
<evidence type="ECO:0000305" key="6"/>
<gene>
    <name type="primary">Bbs9</name>
    <name type="synonym">Pthb1</name>
</gene>
<comment type="function">
    <text evidence="1">The BBSome complex is thought to function as a coat complex required for sorting of specific membrane proteins to the primary cilia. The BBSome complex is required for ciliogenesis but is dispensable for centriolar satellite function. This ciliogenic function is mediated in part by the Rab8 GDP/GTP exchange factor, which localizes to the basal body and contacts the BBSome. Rab8(GTP) enters the primary cilium and promotes extension of the ciliary membrane. Firstly the BBSome associates with the ciliary membrane and binds to RAB3IP/Rabin8, the guanosyl exchange factor (GEF) for Rab8 and then the Rab8-GTP localizes to the cilium and promotes docking and fusion of carrier vesicles to the base of the ciliary membrane. Required for proper BBSome complex assembly and its ciliary localization (By similarity).</text>
</comment>
<comment type="subunit">
    <text evidence="3">Part of BBSome complex, that contains BBS1, BBS2, BBS4, BBS5, BBS7, BBS8/TTC8, BBS9 and BBIP10. Interacts with LZTL1; the interaction mediates the association of LZTL1 with the BBsome complex and regulates BBSome ciliary trafficking.</text>
</comment>
<comment type="subcellular location">
    <subcellularLocation>
        <location evidence="1">Cell projection</location>
        <location evidence="1">Cilium membrane</location>
    </subcellularLocation>
    <subcellularLocation>
        <location evidence="1">Cytoplasm</location>
    </subcellularLocation>
    <subcellularLocation>
        <location evidence="1">Cytoplasm</location>
        <location evidence="1">Cytoskeleton</location>
        <location evidence="1">Microtubule organizing center</location>
        <location evidence="1">Centrosome</location>
        <location evidence="1">Centriolar satellite</location>
    </subcellularLocation>
</comment>
<comment type="alternative products">
    <event type="alternative splicing"/>
    <isoform>
        <id>Q811G0-1</id>
        <name>1</name>
        <sequence type="displayed"/>
    </isoform>
    <isoform>
        <id>Q811G0-2</id>
        <name>2</name>
        <sequence type="described" ref="VSP_018430"/>
    </isoform>
    <isoform>
        <id>Q811G0-3</id>
        <name>3</name>
        <sequence type="described" ref="VSP_018429 VSP_018431 VSP_018432"/>
    </isoform>
    <isoform>
        <id>Q811G0-4</id>
        <name>4</name>
        <sequence type="described" ref="VSP_018429"/>
    </isoform>
</comment>
<comment type="sequence caution" evidence="6">
    <conflict type="erroneous initiation">
        <sequence resource="EMBL-CDS" id="AAH30419"/>
    </conflict>
    <text>Extended N-terminus.</text>
</comment>
<sequence>MSLFKARDWWSTVLGEKEEFDQGCLCLADVDNSGNGHDKIIVGSFMGYLRIFSPHSVKAGGGPQAEDLLLEVHLRDPVLQVEVGKFVSGTEMLHLAVLHSRKLCVYSVSGTLGNVEHGNQYQIKLMYEHHLQRTACNMTYGPFGGVKGRDLICIQSLDGMLMVFEQESYAFGRFLPGFLLPGPLAYSPRTDSFITVSSCRQVESYKYQVLAFATDADKKQEMEQQKLGSGKRLVVDWTLNIGEQALDICIFPLNQSASSVFVLGERNFFCLKDNGQIRFMKKLGYNPSCFLPYCSVSEGTINTLIGNHNHMLHIYQDVTLKWATQLPHVPVAVRVGCFHDLKGVIVTLSDDGHLQCSYLGTDPSLFQAPKVESRELNYDELDVELKELQKIIKDVKLQGVWPLTEQEDDLKVSASVSSTLDSVSQATNVEPGADSVPSITVKITLQNRVVLQKVKLSIYVQPPLQLTCDQFTFDFTVPDMTSSVAFSVYLKRNYTPSELEGNAVVSYSRPTDRNPDGIPRVVQCKFRLPLKLICLPGQPSKTASHKLTIDTNKSPVSLLGLFPDFANPSDDDQVNVMGFRLLGGARVTLLASRTSQRYRIQSEQFEDLWLITNELILRLQEHFEKQGTKDFSCSFSGCVPLQEYFELIDHHFELRINGKKLEELLSERAVQFRAIQRRLLTRFRDKTPAPLQHLDTLLDGTYKQVIALADAIEENQDRLLQSFSGLKSATHLLILLIRLWQRLSADQTAILEAAFLPLQEDTQELGWEETVDAAIAYLLKTCLSKSSKEQALNLSSQLNIPKDTSRLKKHITLLCDRLAKGGRLCVSTDAAAPQAMVVPGGCTPIPESDLEERSLDDSTELFTNHKHLMTEPPMPEVSARQGVLE</sequence>
<name>PTHB1_MOUSE</name>
<proteinExistence type="evidence at protein level"/>
<keyword id="KW-0025">Alternative splicing</keyword>
<keyword id="KW-1003">Cell membrane</keyword>
<keyword id="KW-0966">Cell projection</keyword>
<keyword id="KW-0969">Cilium</keyword>
<keyword id="KW-0970">Cilium biogenesis/degradation</keyword>
<keyword id="KW-0963">Cytoplasm</keyword>
<keyword id="KW-0206">Cytoskeleton</keyword>
<keyword id="KW-0472">Membrane</keyword>
<keyword id="KW-0653">Protein transport</keyword>
<keyword id="KW-1185">Reference proteome</keyword>
<keyword id="KW-0813">Transport</keyword>
<dbReference type="EMBL" id="AK053503">
    <property type="protein sequence ID" value="BAC35408.1"/>
    <property type="molecule type" value="mRNA"/>
</dbReference>
<dbReference type="EMBL" id="AK144730">
    <property type="protein sequence ID" value="BAE26036.1"/>
    <property type="molecule type" value="mRNA"/>
</dbReference>
<dbReference type="EMBL" id="BC030419">
    <property type="protein sequence ID" value="AAH30419.1"/>
    <property type="status" value="ALT_INIT"/>
    <property type="molecule type" value="mRNA"/>
</dbReference>
<dbReference type="EMBL" id="BC046426">
    <property type="protein sequence ID" value="AAH46426.1"/>
    <property type="molecule type" value="mRNA"/>
</dbReference>
<dbReference type="EMBL" id="BC054441">
    <property type="protein sequence ID" value="AAH54441.1"/>
    <property type="molecule type" value="mRNA"/>
</dbReference>
<dbReference type="EMBL" id="U85993">
    <property type="protein sequence ID" value="AAB61920.1"/>
    <property type="molecule type" value="mRNA"/>
</dbReference>
<dbReference type="CCDS" id="CCDS22928.1">
    <molecule id="Q811G0-2"/>
</dbReference>
<dbReference type="CCDS" id="CCDS90520.1">
    <molecule id="Q811G0-1"/>
</dbReference>
<dbReference type="RefSeq" id="NP_001347187.1">
    <molecule id="Q811G0-2"/>
    <property type="nucleotide sequence ID" value="NM_001360258.1"/>
</dbReference>
<dbReference type="RefSeq" id="NP_001347188.1">
    <molecule id="Q811G0-1"/>
    <property type="nucleotide sequence ID" value="NM_001360259.1"/>
</dbReference>
<dbReference type="RefSeq" id="NP_848502.1">
    <molecule id="Q811G0-2"/>
    <property type="nucleotide sequence ID" value="NM_178415.1"/>
</dbReference>
<dbReference type="RefSeq" id="NP_851833.2">
    <molecule id="Q811G0-2"/>
    <property type="nucleotide sequence ID" value="NM_181316.4"/>
</dbReference>
<dbReference type="RefSeq" id="XP_006510478.1">
    <property type="nucleotide sequence ID" value="XM_006510415.3"/>
</dbReference>
<dbReference type="RefSeq" id="XP_006510479.1">
    <molecule id="Q811G0-1"/>
    <property type="nucleotide sequence ID" value="XM_006510416.5"/>
</dbReference>
<dbReference type="RefSeq" id="XP_006510480.1">
    <molecule id="Q811G0-1"/>
    <property type="nucleotide sequence ID" value="XM_006510417.4"/>
</dbReference>
<dbReference type="RefSeq" id="XP_006510481.1">
    <molecule id="Q811G0-1"/>
    <property type="nucleotide sequence ID" value="XM_006510418.5"/>
</dbReference>
<dbReference type="RefSeq" id="XP_006510482.1">
    <property type="nucleotide sequence ID" value="XM_006510419.3"/>
</dbReference>
<dbReference type="RefSeq" id="XP_036010947.1">
    <molecule id="Q811G0-2"/>
    <property type="nucleotide sequence ID" value="XM_036155054.1"/>
</dbReference>
<dbReference type="SMR" id="Q811G0"/>
<dbReference type="BioGRID" id="235567">
    <property type="interactions" value="1"/>
</dbReference>
<dbReference type="ComplexPortal" id="CPX-1909">
    <property type="entry name" value="BBSome complex"/>
</dbReference>
<dbReference type="FunCoup" id="Q811G0">
    <property type="interactions" value="589"/>
</dbReference>
<dbReference type="IntAct" id="Q811G0">
    <property type="interactions" value="5"/>
</dbReference>
<dbReference type="STRING" id="10090.ENSMUSP00000122058"/>
<dbReference type="GlyGen" id="Q811G0">
    <property type="glycosylation" value="1 site, 1 O-linked glycan (1 site)"/>
</dbReference>
<dbReference type="iPTMnet" id="Q811G0"/>
<dbReference type="PhosphoSitePlus" id="Q811G0"/>
<dbReference type="SwissPalm" id="Q811G0"/>
<dbReference type="PaxDb" id="10090-ENSMUSP00000116629"/>
<dbReference type="ProteomicsDB" id="291621">
    <molecule id="Q811G0-1"/>
</dbReference>
<dbReference type="ProteomicsDB" id="291622">
    <molecule id="Q811G0-2"/>
</dbReference>
<dbReference type="ProteomicsDB" id="291623">
    <molecule id="Q811G0-3"/>
</dbReference>
<dbReference type="ProteomicsDB" id="291624">
    <molecule id="Q811G0-4"/>
</dbReference>
<dbReference type="Antibodypedia" id="12805">
    <property type="antibodies" value="161 antibodies from 24 providers"/>
</dbReference>
<dbReference type="DNASU" id="319845"/>
<dbReference type="Ensembl" id="ENSMUST00000039798.16">
    <molecule id="Q811G0-2"/>
    <property type="protein sequence ID" value="ENSMUSP00000043042.10"/>
    <property type="gene ID" value="ENSMUSG00000035919.17"/>
</dbReference>
<dbReference type="Ensembl" id="ENSMUST00000147405.8">
    <molecule id="Q811G0-1"/>
    <property type="protein sequence ID" value="ENSMUSP00000120927.2"/>
    <property type="gene ID" value="ENSMUSG00000035919.17"/>
</dbReference>
<dbReference type="Ensembl" id="ENSMUST00000147712.8">
    <molecule id="Q811G0-2"/>
    <property type="protein sequence ID" value="ENSMUSP00000122058.2"/>
    <property type="gene ID" value="ENSMUSG00000035919.17"/>
</dbReference>
<dbReference type="Ensembl" id="ENSMUST00000150395.8">
    <molecule id="Q811G0-2"/>
    <property type="protein sequence ID" value="ENSMUSP00000116629.2"/>
    <property type="gene ID" value="ENSMUSG00000035919.17"/>
</dbReference>
<dbReference type="GeneID" id="319845"/>
<dbReference type="KEGG" id="mmu:319845"/>
<dbReference type="UCSC" id="uc009oor.1">
    <molecule id="Q811G0-2"/>
    <property type="organism name" value="mouse"/>
</dbReference>
<dbReference type="UCSC" id="uc009oou.1">
    <molecule id="Q811G0-1"/>
    <property type="organism name" value="mouse"/>
</dbReference>
<dbReference type="UCSC" id="uc009oov.1">
    <molecule id="Q811G0-3"/>
    <property type="organism name" value="mouse"/>
</dbReference>
<dbReference type="UCSC" id="uc012gpo.1">
    <molecule id="Q811G0-4"/>
    <property type="organism name" value="mouse"/>
</dbReference>
<dbReference type="AGR" id="MGI:2442833"/>
<dbReference type="CTD" id="27241"/>
<dbReference type="MGI" id="MGI:2442833">
    <property type="gene designation" value="Bbs9"/>
</dbReference>
<dbReference type="VEuPathDB" id="HostDB:ENSMUSG00000035919"/>
<dbReference type="eggNOG" id="KOG3679">
    <property type="taxonomic scope" value="Eukaryota"/>
</dbReference>
<dbReference type="GeneTree" id="ENSGT00390000000803"/>
<dbReference type="HOGENOM" id="CLU_015674_1_0_1"/>
<dbReference type="InParanoid" id="Q811G0"/>
<dbReference type="OMA" id="VPVEDWT"/>
<dbReference type="OrthoDB" id="10262646at2759"/>
<dbReference type="PhylomeDB" id="Q811G0"/>
<dbReference type="TreeFam" id="TF314513"/>
<dbReference type="Reactome" id="R-MMU-5620922">
    <property type="pathway name" value="BBSome-mediated cargo-targeting to cilium"/>
</dbReference>
<dbReference type="BioGRID-ORCS" id="319845">
    <property type="hits" value="2 hits in 76 CRISPR screens"/>
</dbReference>
<dbReference type="ChiTaRS" id="Bbs9">
    <property type="organism name" value="mouse"/>
</dbReference>
<dbReference type="PRO" id="PR:Q811G0"/>
<dbReference type="Proteomes" id="UP000000589">
    <property type="component" value="Chromosome 9"/>
</dbReference>
<dbReference type="RNAct" id="Q811G0">
    <property type="molecule type" value="protein"/>
</dbReference>
<dbReference type="Bgee" id="ENSMUSG00000035919">
    <property type="expression patterns" value="Expressed in spermatocyte and 248 other cell types or tissues"/>
</dbReference>
<dbReference type="ExpressionAtlas" id="Q811G0">
    <property type="expression patterns" value="baseline and differential"/>
</dbReference>
<dbReference type="GO" id="GO:0034464">
    <property type="term" value="C:BBSome"/>
    <property type="evidence" value="ECO:0000314"/>
    <property type="project" value="UniProtKB"/>
</dbReference>
<dbReference type="GO" id="GO:0034451">
    <property type="term" value="C:centriolar satellite"/>
    <property type="evidence" value="ECO:0007669"/>
    <property type="project" value="UniProtKB-SubCell"/>
</dbReference>
<dbReference type="GO" id="GO:0036064">
    <property type="term" value="C:ciliary basal body"/>
    <property type="evidence" value="ECO:0000266"/>
    <property type="project" value="MGI"/>
</dbReference>
<dbReference type="GO" id="GO:0060170">
    <property type="term" value="C:ciliary membrane"/>
    <property type="evidence" value="ECO:0000266"/>
    <property type="project" value="ComplexPortal"/>
</dbReference>
<dbReference type="GO" id="GO:0035869">
    <property type="term" value="C:ciliary transition zone"/>
    <property type="evidence" value="ECO:0007669"/>
    <property type="project" value="Ensembl"/>
</dbReference>
<dbReference type="GO" id="GO:0005929">
    <property type="term" value="C:cilium"/>
    <property type="evidence" value="ECO:0000250"/>
    <property type="project" value="UniProtKB"/>
</dbReference>
<dbReference type="GO" id="GO:0005829">
    <property type="term" value="C:cytosol"/>
    <property type="evidence" value="ECO:0007669"/>
    <property type="project" value="Ensembl"/>
</dbReference>
<dbReference type="GO" id="GO:0016020">
    <property type="term" value="C:membrane"/>
    <property type="evidence" value="ECO:0000314"/>
    <property type="project" value="MGI"/>
</dbReference>
<dbReference type="GO" id="GO:0005654">
    <property type="term" value="C:nucleoplasm"/>
    <property type="evidence" value="ECO:0007669"/>
    <property type="project" value="Ensembl"/>
</dbReference>
<dbReference type="GO" id="GO:0000242">
    <property type="term" value="C:pericentriolar material"/>
    <property type="evidence" value="ECO:0000266"/>
    <property type="project" value="MGI"/>
</dbReference>
<dbReference type="GO" id="GO:0060271">
    <property type="term" value="P:cilium assembly"/>
    <property type="evidence" value="ECO:0000315"/>
    <property type="project" value="FlyBase"/>
</dbReference>
<dbReference type="GO" id="GO:0045444">
    <property type="term" value="P:fat cell differentiation"/>
    <property type="evidence" value="ECO:0000270"/>
    <property type="project" value="BHF-UCL"/>
</dbReference>
<dbReference type="GO" id="GO:0061512">
    <property type="term" value="P:protein localization to cilium"/>
    <property type="evidence" value="ECO:0007669"/>
    <property type="project" value="Ensembl"/>
</dbReference>
<dbReference type="GO" id="GO:0015031">
    <property type="term" value="P:protein transport"/>
    <property type="evidence" value="ECO:0007669"/>
    <property type="project" value="UniProtKB-KW"/>
</dbReference>
<dbReference type="InterPro" id="IPR028074">
    <property type="entry name" value="PHTB1_GAE_dom"/>
</dbReference>
<dbReference type="InterPro" id="IPR028073">
    <property type="entry name" value="PHTB1_N_dom"/>
</dbReference>
<dbReference type="InterPro" id="IPR026511">
    <property type="entry name" value="PTHB1"/>
</dbReference>
<dbReference type="InterPro" id="IPR055364">
    <property type="entry name" value="PTHB1_CtH_dom"/>
</dbReference>
<dbReference type="InterPro" id="IPR055363">
    <property type="entry name" value="PTHB1_hp_dom"/>
</dbReference>
<dbReference type="InterPro" id="IPR055362">
    <property type="entry name" value="PTHB1_pf_dom"/>
</dbReference>
<dbReference type="PANTHER" id="PTHR20991">
    <property type="entry name" value="PARATHYROID HORMONE-RESPONSIVE B1 GENE"/>
    <property type="match status" value="1"/>
</dbReference>
<dbReference type="PANTHER" id="PTHR20991:SF0">
    <property type="entry name" value="PROTEIN PTHB1"/>
    <property type="match status" value="1"/>
</dbReference>
<dbReference type="Pfam" id="PF14727">
    <property type="entry name" value="PHTB1_N"/>
    <property type="match status" value="1"/>
</dbReference>
<dbReference type="Pfam" id="PF23339">
    <property type="entry name" value="PTHB1_CtH"/>
    <property type="match status" value="1"/>
</dbReference>
<dbReference type="Pfam" id="PF14728">
    <property type="entry name" value="PTHB1_GAE"/>
    <property type="match status" value="1"/>
</dbReference>
<dbReference type="Pfam" id="PF23338">
    <property type="entry name" value="PTHB1_hp"/>
    <property type="match status" value="1"/>
</dbReference>
<dbReference type="Pfam" id="PF23337">
    <property type="entry name" value="PTHB1_pf"/>
    <property type="match status" value="1"/>
</dbReference>
<protein>
    <recommendedName>
        <fullName>Protein PTHB1</fullName>
    </recommendedName>
    <alternativeName>
        <fullName>Bardet-Biedl syndrome 9 protein homolog</fullName>
    </alternativeName>
    <alternativeName>
        <fullName>Parathyroid hormone-responsive B1 gene protein homolog</fullName>
    </alternativeName>
</protein>
<feature type="chain" id="PRO_0000235270" description="Protein PTHB1">
    <location>
        <begin position="1"/>
        <end position="885"/>
    </location>
</feature>
<feature type="region of interest" description="Seven-bladed beta-propeller" evidence="2">
    <location>
        <begin position="1"/>
        <end position="406"/>
    </location>
</feature>
<feature type="region of interest" description="Interaction with LZTL1" evidence="1">
    <location>
        <begin position="684"/>
        <end position="764"/>
    </location>
</feature>
<feature type="site" description="Critical for protein stability" evidence="2">
    <location>
        <position position="141"/>
    </location>
</feature>
<feature type="splice variant" id="VSP_018429" description="In isoform 3 and isoform 4." evidence="4 5">
    <location>
        <begin position="1"/>
        <end position="576"/>
    </location>
</feature>
<feature type="splice variant" id="VSP_018430" description="In isoform 2." evidence="4 5">
    <location>
        <begin position="512"/>
        <end position="516"/>
    </location>
</feature>
<feature type="splice variant" id="VSP_018431" description="In isoform 3." evidence="5">
    <original>IALADAIEENQDRLLQSFSGLKSATHLLILLIRLWQRLSADQTAILEAAFLPLQEDTQELGWEETVDAAIAYLLKTCLSKSSKEQALNLSSQLNI</original>
    <variation>SAMSGQMCVSTPVSSFPRVRRQGTDICWTVGSGCVCDAFGVAYKYSFSSLFSQETTTCSQYLYDYNEDLGLLVSSWVSTWDHYFVLKIILAVFTL</variation>
    <location>
        <begin position="706"/>
        <end position="800"/>
    </location>
</feature>
<feature type="splice variant" id="VSP_018432" description="In isoform 3." evidence="5">
    <location>
        <begin position="801"/>
        <end position="885"/>
    </location>
</feature>
<feature type="sequence conflict" description="In Ref. 1; BAE26036." evidence="6" ref="1">
    <original>Q</original>
    <variation>R</variation>
    <location>
        <position position="325"/>
    </location>
</feature>
<feature type="sequence conflict" description="In Ref. 1; BAE26036." evidence="6" ref="1">
    <original>E</original>
    <variation>V</variation>
    <location>
        <position position="885"/>
    </location>
</feature>
<organism>
    <name type="scientific">Mus musculus</name>
    <name type="common">Mouse</name>
    <dbReference type="NCBI Taxonomy" id="10090"/>
    <lineage>
        <taxon>Eukaryota</taxon>
        <taxon>Metazoa</taxon>
        <taxon>Chordata</taxon>
        <taxon>Craniata</taxon>
        <taxon>Vertebrata</taxon>
        <taxon>Euteleostomi</taxon>
        <taxon>Mammalia</taxon>
        <taxon>Eutheria</taxon>
        <taxon>Euarchontoglires</taxon>
        <taxon>Glires</taxon>
        <taxon>Rodentia</taxon>
        <taxon>Myomorpha</taxon>
        <taxon>Muroidea</taxon>
        <taxon>Muridae</taxon>
        <taxon>Murinae</taxon>
        <taxon>Mus</taxon>
        <taxon>Mus</taxon>
    </lineage>
</organism>
<reference key="1">
    <citation type="journal article" date="2005" name="Science">
        <title>The transcriptional landscape of the mammalian genome.</title>
        <authorList>
            <person name="Carninci P."/>
            <person name="Kasukawa T."/>
            <person name="Katayama S."/>
            <person name="Gough J."/>
            <person name="Frith M.C."/>
            <person name="Maeda N."/>
            <person name="Oyama R."/>
            <person name="Ravasi T."/>
            <person name="Lenhard B."/>
            <person name="Wells C."/>
            <person name="Kodzius R."/>
            <person name="Shimokawa K."/>
            <person name="Bajic V.B."/>
            <person name="Brenner S.E."/>
            <person name="Batalov S."/>
            <person name="Forrest A.R."/>
            <person name="Zavolan M."/>
            <person name="Davis M.J."/>
            <person name="Wilming L.G."/>
            <person name="Aidinis V."/>
            <person name="Allen J.E."/>
            <person name="Ambesi-Impiombato A."/>
            <person name="Apweiler R."/>
            <person name="Aturaliya R.N."/>
            <person name="Bailey T.L."/>
            <person name="Bansal M."/>
            <person name="Baxter L."/>
            <person name="Beisel K.W."/>
            <person name="Bersano T."/>
            <person name="Bono H."/>
            <person name="Chalk A.M."/>
            <person name="Chiu K.P."/>
            <person name="Choudhary V."/>
            <person name="Christoffels A."/>
            <person name="Clutterbuck D.R."/>
            <person name="Crowe M.L."/>
            <person name="Dalla E."/>
            <person name="Dalrymple B.P."/>
            <person name="de Bono B."/>
            <person name="Della Gatta G."/>
            <person name="di Bernardo D."/>
            <person name="Down T."/>
            <person name="Engstrom P."/>
            <person name="Fagiolini M."/>
            <person name="Faulkner G."/>
            <person name="Fletcher C.F."/>
            <person name="Fukushima T."/>
            <person name="Furuno M."/>
            <person name="Futaki S."/>
            <person name="Gariboldi M."/>
            <person name="Georgii-Hemming P."/>
            <person name="Gingeras T.R."/>
            <person name="Gojobori T."/>
            <person name="Green R.E."/>
            <person name="Gustincich S."/>
            <person name="Harbers M."/>
            <person name="Hayashi Y."/>
            <person name="Hensch T.K."/>
            <person name="Hirokawa N."/>
            <person name="Hill D."/>
            <person name="Huminiecki L."/>
            <person name="Iacono M."/>
            <person name="Ikeo K."/>
            <person name="Iwama A."/>
            <person name="Ishikawa T."/>
            <person name="Jakt M."/>
            <person name="Kanapin A."/>
            <person name="Katoh M."/>
            <person name="Kawasawa Y."/>
            <person name="Kelso J."/>
            <person name="Kitamura H."/>
            <person name="Kitano H."/>
            <person name="Kollias G."/>
            <person name="Krishnan S.P."/>
            <person name="Kruger A."/>
            <person name="Kummerfeld S.K."/>
            <person name="Kurochkin I.V."/>
            <person name="Lareau L.F."/>
            <person name="Lazarevic D."/>
            <person name="Lipovich L."/>
            <person name="Liu J."/>
            <person name="Liuni S."/>
            <person name="McWilliam S."/>
            <person name="Madan Babu M."/>
            <person name="Madera M."/>
            <person name="Marchionni L."/>
            <person name="Matsuda H."/>
            <person name="Matsuzawa S."/>
            <person name="Miki H."/>
            <person name="Mignone F."/>
            <person name="Miyake S."/>
            <person name="Morris K."/>
            <person name="Mottagui-Tabar S."/>
            <person name="Mulder N."/>
            <person name="Nakano N."/>
            <person name="Nakauchi H."/>
            <person name="Ng P."/>
            <person name="Nilsson R."/>
            <person name="Nishiguchi S."/>
            <person name="Nishikawa S."/>
            <person name="Nori F."/>
            <person name="Ohara O."/>
            <person name="Okazaki Y."/>
            <person name="Orlando V."/>
            <person name="Pang K.C."/>
            <person name="Pavan W.J."/>
            <person name="Pavesi G."/>
            <person name="Pesole G."/>
            <person name="Petrovsky N."/>
            <person name="Piazza S."/>
            <person name="Reed J."/>
            <person name="Reid J.F."/>
            <person name="Ring B.Z."/>
            <person name="Ringwald M."/>
            <person name="Rost B."/>
            <person name="Ruan Y."/>
            <person name="Salzberg S.L."/>
            <person name="Sandelin A."/>
            <person name="Schneider C."/>
            <person name="Schoenbach C."/>
            <person name="Sekiguchi K."/>
            <person name="Semple C.A."/>
            <person name="Seno S."/>
            <person name="Sessa L."/>
            <person name="Sheng Y."/>
            <person name="Shibata Y."/>
            <person name="Shimada H."/>
            <person name="Shimada K."/>
            <person name="Silva D."/>
            <person name="Sinclair B."/>
            <person name="Sperling S."/>
            <person name="Stupka E."/>
            <person name="Sugiura K."/>
            <person name="Sultana R."/>
            <person name="Takenaka Y."/>
            <person name="Taki K."/>
            <person name="Tammoja K."/>
            <person name="Tan S.L."/>
            <person name="Tang S."/>
            <person name="Taylor M.S."/>
            <person name="Tegner J."/>
            <person name="Teichmann S.A."/>
            <person name="Ueda H.R."/>
            <person name="van Nimwegen E."/>
            <person name="Verardo R."/>
            <person name="Wei C.L."/>
            <person name="Yagi K."/>
            <person name="Yamanishi H."/>
            <person name="Zabarovsky E."/>
            <person name="Zhu S."/>
            <person name="Zimmer A."/>
            <person name="Hide W."/>
            <person name="Bult C."/>
            <person name="Grimmond S.M."/>
            <person name="Teasdale R.D."/>
            <person name="Liu E.T."/>
            <person name="Brusic V."/>
            <person name="Quackenbush J."/>
            <person name="Wahlestedt C."/>
            <person name="Mattick J.S."/>
            <person name="Hume D.A."/>
            <person name="Kai C."/>
            <person name="Sasaki D."/>
            <person name="Tomaru Y."/>
            <person name="Fukuda S."/>
            <person name="Kanamori-Katayama M."/>
            <person name="Suzuki M."/>
            <person name="Aoki J."/>
            <person name="Arakawa T."/>
            <person name="Iida J."/>
            <person name="Imamura K."/>
            <person name="Itoh M."/>
            <person name="Kato T."/>
            <person name="Kawaji H."/>
            <person name="Kawagashira N."/>
            <person name="Kawashima T."/>
            <person name="Kojima M."/>
            <person name="Kondo S."/>
            <person name="Konno H."/>
            <person name="Nakano K."/>
            <person name="Ninomiya N."/>
            <person name="Nishio T."/>
            <person name="Okada M."/>
            <person name="Plessy C."/>
            <person name="Shibata K."/>
            <person name="Shiraki T."/>
            <person name="Suzuki S."/>
            <person name="Tagami M."/>
            <person name="Waki K."/>
            <person name="Watahiki A."/>
            <person name="Okamura-Oho Y."/>
            <person name="Suzuki H."/>
            <person name="Kawai J."/>
            <person name="Hayashizaki Y."/>
        </authorList>
    </citation>
    <scope>NUCLEOTIDE SEQUENCE [LARGE SCALE MRNA] (ISOFORMS 2 AND 3)</scope>
    <source>
        <strain>C57BL/6J</strain>
        <tissue>Eye</tissue>
        <tissue>Lung</tissue>
    </source>
</reference>
<reference key="2">
    <citation type="journal article" date="2004" name="Genome Res.">
        <title>The status, quality, and expansion of the NIH full-length cDNA project: the Mammalian Gene Collection (MGC).</title>
        <authorList>
            <consortium name="The MGC Project Team"/>
        </authorList>
    </citation>
    <scope>NUCLEOTIDE SEQUENCE [LARGE SCALE MRNA] (ISOFORMS 2 AND 4)</scope>
    <scope>NUCLEOTIDE SEQUENCE [LARGE SCALE MRNA] OF 105-885 (ISOFORM 1)</scope>
    <source>
        <strain>FVB/N</strain>
        <tissue>Eye</tissue>
        <tissue>Mammary tumor</tissue>
    </source>
</reference>
<reference key="3">
    <citation type="submission" date="1997-01" db="EMBL/GenBank/DDBJ databases">
        <title>Positional candidates for the RP9 retinitis pigmentosa gene.</title>
        <authorList>
            <person name="Keen T.J."/>
        </authorList>
    </citation>
    <scope>NUCLEOTIDE SEQUENCE [MRNA] OF 667-885</scope>
    <source>
        <tissue>Fetus</tissue>
    </source>
</reference>
<reference key="4">
    <citation type="journal article" date="2010" name="Cell">
        <title>A tissue-specific atlas of mouse protein phosphorylation and expression.</title>
        <authorList>
            <person name="Huttlin E.L."/>
            <person name="Jedrychowski M.P."/>
            <person name="Elias J.E."/>
            <person name="Goswami T."/>
            <person name="Rad R."/>
            <person name="Beausoleil S.A."/>
            <person name="Villen J."/>
            <person name="Haas W."/>
            <person name="Sowa M.E."/>
            <person name="Gygi S.P."/>
        </authorList>
    </citation>
    <scope>IDENTIFICATION BY MASS SPECTROMETRY [LARGE SCALE ANALYSIS]</scope>
    <source>
        <tissue>Testis</tissue>
    </source>
</reference>
<reference key="5">
    <citation type="journal article" date="2011" name="PLoS Genet.">
        <title>A novel protein LZTFL1 regulates ciliary trafficking of the BBSome and Smoothened.</title>
        <authorList>
            <person name="Seo S."/>
            <person name="Zhang Q."/>
            <person name="Bugge K."/>
            <person name="Breslow D.K."/>
            <person name="Searby C.C."/>
            <person name="Nachury M.V."/>
            <person name="Sheffield V.C."/>
        </authorList>
    </citation>
    <scope>INTERACTION WITH LZTL1</scope>
    <scope>IDENTIFICATION IN THE BBSOME COMPLEX</scope>
</reference>
<accession>Q811G0</accession>
<accession>P97498</accession>
<accession>Q3UMR2</accession>
<accession>Q7TQH9</accession>
<accession>Q8BKD7</accession>
<accession>Q8K0T5</accession>